<protein>
    <recommendedName>
        <fullName evidence="1">L-rhamnose isomerase</fullName>
        <ecNumber evidence="1">5.3.1.14</ecNumber>
    </recommendedName>
</protein>
<gene>
    <name evidence="1" type="primary">rhaA</name>
    <name type="ordered locus">Lm4b_02820</name>
</gene>
<comment type="function">
    <text evidence="1">Catalyzes the interconversion of L-rhamnose and L-rhamnulose.</text>
</comment>
<comment type="catalytic activity">
    <reaction evidence="1">
        <text>L-rhamnopyranose = L-rhamnulose</text>
        <dbReference type="Rhea" id="RHEA:23160"/>
        <dbReference type="ChEBI" id="CHEBI:17897"/>
        <dbReference type="ChEBI" id="CHEBI:62346"/>
        <dbReference type="EC" id="5.3.1.14"/>
    </reaction>
</comment>
<comment type="cofactor">
    <cofactor evidence="1">
        <name>Mn(2+)</name>
        <dbReference type="ChEBI" id="CHEBI:29035"/>
    </cofactor>
    <text evidence="1">Binds 1 Mn(2+) ion per subunit.</text>
</comment>
<comment type="pathway">
    <text evidence="1">Carbohydrate degradation; L-rhamnose degradation; glycerone phosphate from L-rhamnose: step 1/3.</text>
</comment>
<comment type="subcellular location">
    <subcellularLocation>
        <location evidence="1">Cytoplasm</location>
    </subcellularLocation>
</comment>
<comment type="similarity">
    <text evidence="1">Belongs to the rhamnose isomerase family.</text>
</comment>
<name>RHAA_LISMC</name>
<reference key="1">
    <citation type="journal article" date="2012" name="BMC Genomics">
        <title>Comparative genomics and transcriptomics of lineages I, II, and III strains of Listeria monocytogenes.</title>
        <authorList>
            <person name="Hain T."/>
            <person name="Ghai R."/>
            <person name="Billion A."/>
            <person name="Kuenne C.T."/>
            <person name="Steinweg C."/>
            <person name="Izar B."/>
            <person name="Mohamed W."/>
            <person name="Mraheil M."/>
            <person name="Domann E."/>
            <person name="Schaffrath S."/>
            <person name="Karst U."/>
            <person name="Goesmann A."/>
            <person name="Oehm S."/>
            <person name="Puhler A."/>
            <person name="Merkl R."/>
            <person name="Vorwerk S."/>
            <person name="Glaser P."/>
            <person name="Garrido P."/>
            <person name="Rusniok C."/>
            <person name="Buchrieser C."/>
            <person name="Goebel W."/>
            <person name="Chakraborty T."/>
        </authorList>
    </citation>
    <scope>NUCLEOTIDE SEQUENCE [LARGE SCALE GENOMIC DNA]</scope>
    <source>
        <strain>CLIP80459</strain>
    </source>
</reference>
<dbReference type="EC" id="5.3.1.14" evidence="1"/>
<dbReference type="EMBL" id="FM242711">
    <property type="protein sequence ID" value="CAS06574.1"/>
    <property type="molecule type" value="Genomic_DNA"/>
</dbReference>
<dbReference type="RefSeq" id="WP_003723720.1">
    <property type="nucleotide sequence ID" value="NC_012488.1"/>
</dbReference>
<dbReference type="SMR" id="C1L0I1"/>
<dbReference type="KEGG" id="lmc:Lm4b_02820"/>
<dbReference type="HOGENOM" id="CLU_052790_0_0_9"/>
<dbReference type="UniPathway" id="UPA00541">
    <property type="reaction ID" value="UER00601"/>
</dbReference>
<dbReference type="GO" id="GO:0005737">
    <property type="term" value="C:cytoplasm"/>
    <property type="evidence" value="ECO:0007669"/>
    <property type="project" value="UniProtKB-SubCell"/>
</dbReference>
<dbReference type="GO" id="GO:0008740">
    <property type="term" value="F:L-rhamnose isomerase activity"/>
    <property type="evidence" value="ECO:0007669"/>
    <property type="project" value="UniProtKB-UniRule"/>
</dbReference>
<dbReference type="GO" id="GO:0030145">
    <property type="term" value="F:manganese ion binding"/>
    <property type="evidence" value="ECO:0007669"/>
    <property type="project" value="UniProtKB-UniRule"/>
</dbReference>
<dbReference type="GO" id="GO:0019324">
    <property type="term" value="P:L-lyxose metabolic process"/>
    <property type="evidence" value="ECO:0007669"/>
    <property type="project" value="TreeGrafter"/>
</dbReference>
<dbReference type="GO" id="GO:0019301">
    <property type="term" value="P:rhamnose catabolic process"/>
    <property type="evidence" value="ECO:0007669"/>
    <property type="project" value="UniProtKB-UniRule"/>
</dbReference>
<dbReference type="FunFam" id="3.20.20.150:FF:000006">
    <property type="entry name" value="L-rhamnose isomerase"/>
    <property type="match status" value="1"/>
</dbReference>
<dbReference type="Gene3D" id="3.20.20.150">
    <property type="entry name" value="Divalent-metal-dependent TIM barrel enzymes"/>
    <property type="match status" value="1"/>
</dbReference>
<dbReference type="HAMAP" id="MF_00541">
    <property type="entry name" value="RhaA"/>
    <property type="match status" value="1"/>
</dbReference>
<dbReference type="InterPro" id="IPR050337">
    <property type="entry name" value="L-rhamnose_isomerase"/>
</dbReference>
<dbReference type="InterPro" id="IPR009308">
    <property type="entry name" value="Rhamnose_isomerase"/>
</dbReference>
<dbReference type="InterPro" id="IPR036237">
    <property type="entry name" value="Xyl_isomerase-like_sf"/>
</dbReference>
<dbReference type="NCBIfam" id="NF002203">
    <property type="entry name" value="PRK01076.1"/>
    <property type="match status" value="1"/>
</dbReference>
<dbReference type="NCBIfam" id="TIGR01748">
    <property type="entry name" value="rhaA"/>
    <property type="match status" value="1"/>
</dbReference>
<dbReference type="PANTHER" id="PTHR30268">
    <property type="entry name" value="L-RHAMNOSE ISOMERASE"/>
    <property type="match status" value="1"/>
</dbReference>
<dbReference type="PANTHER" id="PTHR30268:SF0">
    <property type="entry name" value="L-RHAMNOSE ISOMERASE"/>
    <property type="match status" value="1"/>
</dbReference>
<dbReference type="Pfam" id="PF06134">
    <property type="entry name" value="RhaA"/>
    <property type="match status" value="1"/>
</dbReference>
<dbReference type="SUPFAM" id="SSF51658">
    <property type="entry name" value="Xylose isomerase-like"/>
    <property type="match status" value="1"/>
</dbReference>
<accession>C1L0I1</accession>
<organism>
    <name type="scientific">Listeria monocytogenes serotype 4b (strain CLIP80459)</name>
    <dbReference type="NCBI Taxonomy" id="568819"/>
    <lineage>
        <taxon>Bacteria</taxon>
        <taxon>Bacillati</taxon>
        <taxon>Bacillota</taxon>
        <taxon>Bacilli</taxon>
        <taxon>Bacillales</taxon>
        <taxon>Listeriaceae</taxon>
        <taxon>Listeria</taxon>
    </lineage>
</organism>
<proteinExistence type="inferred from homology"/>
<feature type="chain" id="PRO_1000211953" description="L-rhamnose isomerase">
    <location>
        <begin position="1"/>
        <end position="420"/>
    </location>
</feature>
<feature type="binding site" evidence="1">
    <location>
        <position position="264"/>
    </location>
    <ligand>
        <name>Mn(2+)</name>
        <dbReference type="ChEBI" id="CHEBI:29035"/>
    </ligand>
</feature>
<feature type="binding site" evidence="1">
    <location>
        <position position="296"/>
    </location>
    <ligand>
        <name>Mn(2+)</name>
        <dbReference type="ChEBI" id="CHEBI:29035"/>
    </ligand>
</feature>
<feature type="binding site" evidence="1">
    <location>
        <position position="298"/>
    </location>
    <ligand>
        <name>Mn(2+)</name>
        <dbReference type="ChEBI" id="CHEBI:29035"/>
    </ligand>
</feature>
<evidence type="ECO:0000255" key="1">
    <source>
        <dbReference type="HAMAP-Rule" id="MF_00541"/>
    </source>
</evidence>
<keyword id="KW-0963">Cytoplasm</keyword>
<keyword id="KW-0413">Isomerase</keyword>
<keyword id="KW-0464">Manganese</keyword>
<keyword id="KW-0479">Metal-binding</keyword>
<keyword id="KW-0684">Rhamnose metabolism</keyword>
<sequence length="420" mass="48051">MGQETEISKRYQVAKERYQAIGVDTEKALKTLKDIKISMHCWQGDDVKGFLNPDGELTGGIMATGNYPGAAHTPKQLRQDLEKAYSLIPGKHKLNLHAIYVDTDEKVDLNEIEPKHFTPWVEWAKEQGLGLDFNPTFFSHPMFKDNYTLASPDKEVRDFWIEHGKRSRKISEYFGKELGQTSINNFWVPDGIKDCPIDRYTPRKRLMEALDEVFAEKLDEKYTQEAVESKLFGLGAEAYTVGSHEFYMGYGITRDKLICLDAGHFHPTEVISNKLSSLALFSKGVMLHVSRPVRWDSDHVVIMDDELIEIGRELVRNDLLGITNIGLDFFDATINRIAAWVVGTRNTQKSLLKALLEPTADLKKMELENDFTSRMAITEELKDFPFGDVWNYFCEINGVPVGLDWLKEVKAYEEDVLLKR</sequence>